<reference key="1">
    <citation type="journal article" date="2008" name="Antimicrob. Agents Chemother.">
        <title>Whole-genome pyrosequencing of an epidemic multidrug-resistant Acinetobacter baumannii strain belonging to the European clone II group.</title>
        <authorList>
            <person name="Iacono M."/>
            <person name="Villa L."/>
            <person name="Fortini D."/>
            <person name="Bordoni R."/>
            <person name="Imperi F."/>
            <person name="Bonnal R.J."/>
            <person name="Sicheritz-Ponten T."/>
            <person name="De Bellis G."/>
            <person name="Visca P."/>
            <person name="Cassone A."/>
            <person name="Carattoli A."/>
        </authorList>
    </citation>
    <scope>NUCLEOTIDE SEQUENCE [LARGE SCALE GENOMIC DNA]</scope>
    <source>
        <strain>ACICU</strain>
    </source>
</reference>
<protein>
    <recommendedName>
        <fullName evidence="1">Peptide methionine sulfoxide reductase MsrA</fullName>
        <shortName evidence="1">Protein-methionine-S-oxide reductase</shortName>
        <ecNumber evidence="1">1.8.4.11</ecNumber>
    </recommendedName>
    <alternativeName>
        <fullName evidence="1">Peptide-methionine (S)-S-oxide reductase</fullName>
        <shortName evidence="1">Peptide Met(O) reductase</shortName>
    </alternativeName>
</protein>
<accession>B2I399</accession>
<sequence length="173" mass="19807">MQQALFGGGCFWCVEAVFLQIRGVEKVTSGYAGGHTTHPTYEQVCQGDTQHAEVVLIDFDEQQVTYSQLLDVFFATHDPTTLNRQGNDIGTQYRSVIYYFNEEQKQAAEHTIQTLKDDDLDIVTELSPAPTFYPAEDYHQNYYEKNPSQGYCNFAIPPKLLKLHSKFQHLMKN</sequence>
<gene>
    <name evidence="1" type="primary">msrA</name>
    <name type="ordered locus">ACICU_00465</name>
</gene>
<proteinExistence type="inferred from homology"/>
<keyword id="KW-0560">Oxidoreductase</keyword>
<feature type="chain" id="PRO_1000145390" description="Peptide methionine sulfoxide reductase MsrA">
    <location>
        <begin position="1"/>
        <end position="173"/>
    </location>
</feature>
<feature type="active site" evidence="1">
    <location>
        <position position="10"/>
    </location>
</feature>
<organism>
    <name type="scientific">Acinetobacter baumannii (strain ACICU)</name>
    <dbReference type="NCBI Taxonomy" id="405416"/>
    <lineage>
        <taxon>Bacteria</taxon>
        <taxon>Pseudomonadati</taxon>
        <taxon>Pseudomonadota</taxon>
        <taxon>Gammaproteobacteria</taxon>
        <taxon>Moraxellales</taxon>
        <taxon>Moraxellaceae</taxon>
        <taxon>Acinetobacter</taxon>
        <taxon>Acinetobacter calcoaceticus/baumannii complex</taxon>
    </lineage>
</organism>
<evidence type="ECO:0000255" key="1">
    <source>
        <dbReference type="HAMAP-Rule" id="MF_01401"/>
    </source>
</evidence>
<comment type="function">
    <text evidence="1">Has an important function as a repair enzyme for proteins that have been inactivated by oxidation. Catalyzes the reversible oxidation-reduction of methionine sulfoxide in proteins to methionine.</text>
</comment>
<comment type="catalytic activity">
    <reaction evidence="1">
        <text>L-methionyl-[protein] + [thioredoxin]-disulfide + H2O = L-methionyl-(S)-S-oxide-[protein] + [thioredoxin]-dithiol</text>
        <dbReference type="Rhea" id="RHEA:14217"/>
        <dbReference type="Rhea" id="RHEA-COMP:10698"/>
        <dbReference type="Rhea" id="RHEA-COMP:10700"/>
        <dbReference type="Rhea" id="RHEA-COMP:12313"/>
        <dbReference type="Rhea" id="RHEA-COMP:12315"/>
        <dbReference type="ChEBI" id="CHEBI:15377"/>
        <dbReference type="ChEBI" id="CHEBI:16044"/>
        <dbReference type="ChEBI" id="CHEBI:29950"/>
        <dbReference type="ChEBI" id="CHEBI:44120"/>
        <dbReference type="ChEBI" id="CHEBI:50058"/>
        <dbReference type="EC" id="1.8.4.11"/>
    </reaction>
</comment>
<comment type="catalytic activity">
    <reaction evidence="1">
        <text>[thioredoxin]-disulfide + L-methionine + H2O = L-methionine (S)-S-oxide + [thioredoxin]-dithiol</text>
        <dbReference type="Rhea" id="RHEA:19993"/>
        <dbReference type="Rhea" id="RHEA-COMP:10698"/>
        <dbReference type="Rhea" id="RHEA-COMP:10700"/>
        <dbReference type="ChEBI" id="CHEBI:15377"/>
        <dbReference type="ChEBI" id="CHEBI:29950"/>
        <dbReference type="ChEBI" id="CHEBI:50058"/>
        <dbReference type="ChEBI" id="CHEBI:57844"/>
        <dbReference type="ChEBI" id="CHEBI:58772"/>
        <dbReference type="EC" id="1.8.4.11"/>
    </reaction>
</comment>
<comment type="similarity">
    <text evidence="1">Belongs to the MsrA Met sulfoxide reductase family.</text>
</comment>
<name>MSRA_ACIBC</name>
<dbReference type="EC" id="1.8.4.11" evidence="1"/>
<dbReference type="EMBL" id="CP000863">
    <property type="protein sequence ID" value="ACC55777.1"/>
    <property type="molecule type" value="Genomic_DNA"/>
</dbReference>
<dbReference type="RefSeq" id="WP_001183413.1">
    <property type="nucleotide sequence ID" value="NZ_CP031380.1"/>
</dbReference>
<dbReference type="SMR" id="B2I399"/>
<dbReference type="GeneID" id="92892449"/>
<dbReference type="KEGG" id="abc:ACICU_00465"/>
<dbReference type="HOGENOM" id="CLU_031040_10_0_6"/>
<dbReference type="Proteomes" id="UP000008839">
    <property type="component" value="Chromosome"/>
</dbReference>
<dbReference type="GO" id="GO:0033744">
    <property type="term" value="F:L-methionine:thioredoxin-disulfide S-oxidoreductase activity"/>
    <property type="evidence" value="ECO:0007669"/>
    <property type="project" value="RHEA"/>
</dbReference>
<dbReference type="GO" id="GO:0008113">
    <property type="term" value="F:peptide-methionine (S)-S-oxide reductase activity"/>
    <property type="evidence" value="ECO:0007669"/>
    <property type="project" value="UniProtKB-UniRule"/>
</dbReference>
<dbReference type="GO" id="GO:0036211">
    <property type="term" value="P:protein modification process"/>
    <property type="evidence" value="ECO:0007669"/>
    <property type="project" value="UniProtKB-UniRule"/>
</dbReference>
<dbReference type="Gene3D" id="3.30.1060.10">
    <property type="entry name" value="Peptide methionine sulphoxide reductase MsrA"/>
    <property type="match status" value="1"/>
</dbReference>
<dbReference type="HAMAP" id="MF_01401">
    <property type="entry name" value="MsrA"/>
    <property type="match status" value="1"/>
</dbReference>
<dbReference type="InterPro" id="IPR002569">
    <property type="entry name" value="Met_Sox_Rdtase_MsrA_dom"/>
</dbReference>
<dbReference type="InterPro" id="IPR036509">
    <property type="entry name" value="Met_Sox_Rdtase_MsrA_sf"/>
</dbReference>
<dbReference type="NCBIfam" id="TIGR00401">
    <property type="entry name" value="msrA"/>
    <property type="match status" value="1"/>
</dbReference>
<dbReference type="PANTHER" id="PTHR43774">
    <property type="entry name" value="PEPTIDE METHIONINE SULFOXIDE REDUCTASE"/>
    <property type="match status" value="1"/>
</dbReference>
<dbReference type="PANTHER" id="PTHR43774:SF1">
    <property type="entry name" value="PEPTIDE METHIONINE SULFOXIDE REDUCTASE MSRA 2"/>
    <property type="match status" value="1"/>
</dbReference>
<dbReference type="Pfam" id="PF01625">
    <property type="entry name" value="PMSR"/>
    <property type="match status" value="1"/>
</dbReference>
<dbReference type="SUPFAM" id="SSF55068">
    <property type="entry name" value="Peptide methionine sulfoxide reductase"/>
    <property type="match status" value="1"/>
</dbReference>